<organism>
    <name type="scientific">Chloroflexus aurantiacus (strain ATCC 29364 / DSM 637 / Y-400-fl)</name>
    <dbReference type="NCBI Taxonomy" id="480224"/>
    <lineage>
        <taxon>Bacteria</taxon>
        <taxon>Bacillati</taxon>
        <taxon>Chloroflexota</taxon>
        <taxon>Chloroflexia</taxon>
        <taxon>Chloroflexales</taxon>
        <taxon>Chloroflexineae</taxon>
        <taxon>Chloroflexaceae</taxon>
        <taxon>Chloroflexus</taxon>
    </lineage>
</organism>
<accession>B9LK98</accession>
<protein>
    <recommendedName>
        <fullName evidence="1">tRNA-specific 2-thiouridylase MnmA</fullName>
        <ecNumber evidence="1">2.8.1.13</ecNumber>
    </recommendedName>
</protein>
<proteinExistence type="inferred from homology"/>
<name>MNMA_CHLSY</name>
<gene>
    <name evidence="1" type="primary">mnmA</name>
    <name type="ordered locus">Chy400_0725</name>
</gene>
<evidence type="ECO:0000255" key="1">
    <source>
        <dbReference type="HAMAP-Rule" id="MF_00144"/>
    </source>
</evidence>
<sequence>MANVLVAMSGGVDSSLAAALLLEAGHQVTGVTMHLWDDDEQGLRESLCCAAEAAASARRVCALLGIPFYVFNYQREFRRHVIDYFIRAYTHGLTPNPCVECNRMIKFRALLDRARTLGFDAVATGHYARIIQGEDGRYQLWRAVDLEKDQSYMLHMLGQAELSRLIFPIGAYTKREVREMAAARGLPSADREESQDICFVPDGDYRNLLRIESPESLVPGPIVDLEGREIGRHRGLPLYTVGQRRGLGLGGGEPRYVVAIDPARNALIVGPAAALNRARFTVIDACWVDDAPPAESFTCLVQVRAHAEPLPARVSQQPDGRWLVELERPQRAVSPGQAAVFYRGQQVLGGGWIARPEVA</sequence>
<reference key="1">
    <citation type="submission" date="2009-01" db="EMBL/GenBank/DDBJ databases">
        <title>Complete sequence of Chloroflexus sp. Y-400-fl.</title>
        <authorList>
            <consortium name="US DOE Joint Genome Institute"/>
            <person name="Lucas S."/>
            <person name="Copeland A."/>
            <person name="Lapidus A."/>
            <person name="Glavina del Rio T."/>
            <person name="Dalin E."/>
            <person name="Tice H."/>
            <person name="Bruce D."/>
            <person name="Goodwin L."/>
            <person name="Pitluck S."/>
            <person name="Sims D."/>
            <person name="Kiss H."/>
            <person name="Brettin T."/>
            <person name="Detter J.C."/>
            <person name="Han C."/>
            <person name="Larimer F."/>
            <person name="Land M."/>
            <person name="Hauser L."/>
            <person name="Kyrpides N."/>
            <person name="Ovchinnikova G."/>
            <person name="Bryant D.A."/>
            <person name="Richardson P."/>
        </authorList>
    </citation>
    <scope>NUCLEOTIDE SEQUENCE [LARGE SCALE GENOMIC DNA]</scope>
    <source>
        <strain>ATCC 29364 / DSM 637 / Y-400-fl</strain>
    </source>
</reference>
<dbReference type="EC" id="2.8.1.13" evidence="1"/>
<dbReference type="EMBL" id="CP001364">
    <property type="protein sequence ID" value="ACM52155.1"/>
    <property type="molecule type" value="Genomic_DNA"/>
</dbReference>
<dbReference type="SMR" id="B9LK98"/>
<dbReference type="KEGG" id="chl:Chy400_0725"/>
<dbReference type="HOGENOM" id="CLU_035188_0_0_0"/>
<dbReference type="OrthoDB" id="9800696at2"/>
<dbReference type="GO" id="GO:0005737">
    <property type="term" value="C:cytoplasm"/>
    <property type="evidence" value="ECO:0007669"/>
    <property type="project" value="UniProtKB-SubCell"/>
</dbReference>
<dbReference type="GO" id="GO:0005524">
    <property type="term" value="F:ATP binding"/>
    <property type="evidence" value="ECO:0007669"/>
    <property type="project" value="UniProtKB-KW"/>
</dbReference>
<dbReference type="GO" id="GO:0000049">
    <property type="term" value="F:tRNA binding"/>
    <property type="evidence" value="ECO:0007669"/>
    <property type="project" value="UniProtKB-KW"/>
</dbReference>
<dbReference type="GO" id="GO:0103016">
    <property type="term" value="F:tRNA-uridine 2-sulfurtransferase activity"/>
    <property type="evidence" value="ECO:0007669"/>
    <property type="project" value="UniProtKB-EC"/>
</dbReference>
<dbReference type="GO" id="GO:0002143">
    <property type="term" value="P:tRNA wobble position uridine thiolation"/>
    <property type="evidence" value="ECO:0007669"/>
    <property type="project" value="TreeGrafter"/>
</dbReference>
<dbReference type="CDD" id="cd01998">
    <property type="entry name" value="MnmA_TRMU-like"/>
    <property type="match status" value="1"/>
</dbReference>
<dbReference type="FunFam" id="2.30.30.280:FF:000001">
    <property type="entry name" value="tRNA-specific 2-thiouridylase MnmA"/>
    <property type="match status" value="1"/>
</dbReference>
<dbReference type="FunFam" id="2.40.30.10:FF:000127">
    <property type="entry name" value="tRNA-specific 2-thiouridylase MnmA"/>
    <property type="match status" value="1"/>
</dbReference>
<dbReference type="FunFam" id="3.40.50.620:FF:000115">
    <property type="entry name" value="tRNA-specific 2-thiouridylase MnmA"/>
    <property type="match status" value="1"/>
</dbReference>
<dbReference type="Gene3D" id="2.30.30.280">
    <property type="entry name" value="Adenine nucleotide alpha hydrolases-like domains"/>
    <property type="match status" value="1"/>
</dbReference>
<dbReference type="Gene3D" id="3.40.50.620">
    <property type="entry name" value="HUPs"/>
    <property type="match status" value="1"/>
</dbReference>
<dbReference type="Gene3D" id="2.40.30.10">
    <property type="entry name" value="Translation factors"/>
    <property type="match status" value="1"/>
</dbReference>
<dbReference type="HAMAP" id="MF_00144">
    <property type="entry name" value="tRNA_thiouridyl_MnmA"/>
    <property type="match status" value="1"/>
</dbReference>
<dbReference type="InterPro" id="IPR004506">
    <property type="entry name" value="MnmA-like"/>
</dbReference>
<dbReference type="InterPro" id="IPR046885">
    <property type="entry name" value="MnmA-like_C"/>
</dbReference>
<dbReference type="InterPro" id="IPR046884">
    <property type="entry name" value="MnmA-like_central"/>
</dbReference>
<dbReference type="InterPro" id="IPR023382">
    <property type="entry name" value="MnmA-like_central_sf"/>
</dbReference>
<dbReference type="InterPro" id="IPR014729">
    <property type="entry name" value="Rossmann-like_a/b/a_fold"/>
</dbReference>
<dbReference type="NCBIfam" id="NF001138">
    <property type="entry name" value="PRK00143.1"/>
    <property type="match status" value="1"/>
</dbReference>
<dbReference type="NCBIfam" id="TIGR00420">
    <property type="entry name" value="trmU"/>
    <property type="match status" value="1"/>
</dbReference>
<dbReference type="PANTHER" id="PTHR11933:SF5">
    <property type="entry name" value="MITOCHONDRIAL TRNA-SPECIFIC 2-THIOURIDYLASE 1"/>
    <property type="match status" value="1"/>
</dbReference>
<dbReference type="PANTHER" id="PTHR11933">
    <property type="entry name" value="TRNA 5-METHYLAMINOMETHYL-2-THIOURIDYLATE -METHYLTRANSFERASE"/>
    <property type="match status" value="1"/>
</dbReference>
<dbReference type="Pfam" id="PF03054">
    <property type="entry name" value="tRNA_Me_trans"/>
    <property type="match status" value="1"/>
</dbReference>
<dbReference type="Pfam" id="PF20258">
    <property type="entry name" value="tRNA_Me_trans_C"/>
    <property type="match status" value="1"/>
</dbReference>
<dbReference type="Pfam" id="PF20259">
    <property type="entry name" value="tRNA_Me_trans_M"/>
    <property type="match status" value="1"/>
</dbReference>
<dbReference type="SUPFAM" id="SSF52402">
    <property type="entry name" value="Adenine nucleotide alpha hydrolases-like"/>
    <property type="match status" value="1"/>
</dbReference>
<comment type="function">
    <text evidence="1">Catalyzes the 2-thiolation of uridine at the wobble position (U34) of tRNA, leading to the formation of s(2)U34.</text>
</comment>
<comment type="catalytic activity">
    <reaction evidence="1">
        <text>S-sulfanyl-L-cysteinyl-[protein] + uridine(34) in tRNA + AH2 + ATP = 2-thiouridine(34) in tRNA + L-cysteinyl-[protein] + A + AMP + diphosphate + H(+)</text>
        <dbReference type="Rhea" id="RHEA:47032"/>
        <dbReference type="Rhea" id="RHEA-COMP:10131"/>
        <dbReference type="Rhea" id="RHEA-COMP:11726"/>
        <dbReference type="Rhea" id="RHEA-COMP:11727"/>
        <dbReference type="Rhea" id="RHEA-COMP:11728"/>
        <dbReference type="ChEBI" id="CHEBI:13193"/>
        <dbReference type="ChEBI" id="CHEBI:15378"/>
        <dbReference type="ChEBI" id="CHEBI:17499"/>
        <dbReference type="ChEBI" id="CHEBI:29950"/>
        <dbReference type="ChEBI" id="CHEBI:30616"/>
        <dbReference type="ChEBI" id="CHEBI:33019"/>
        <dbReference type="ChEBI" id="CHEBI:61963"/>
        <dbReference type="ChEBI" id="CHEBI:65315"/>
        <dbReference type="ChEBI" id="CHEBI:87170"/>
        <dbReference type="ChEBI" id="CHEBI:456215"/>
        <dbReference type="EC" id="2.8.1.13"/>
    </reaction>
</comment>
<comment type="subcellular location">
    <subcellularLocation>
        <location evidence="1">Cytoplasm</location>
    </subcellularLocation>
</comment>
<comment type="similarity">
    <text evidence="1">Belongs to the MnmA/TRMU family.</text>
</comment>
<keyword id="KW-0067">ATP-binding</keyword>
<keyword id="KW-0963">Cytoplasm</keyword>
<keyword id="KW-1015">Disulfide bond</keyword>
<keyword id="KW-0547">Nucleotide-binding</keyword>
<keyword id="KW-0694">RNA-binding</keyword>
<keyword id="KW-0808">Transferase</keyword>
<keyword id="KW-0819">tRNA processing</keyword>
<keyword id="KW-0820">tRNA-binding</keyword>
<feature type="chain" id="PRO_1000198606" description="tRNA-specific 2-thiouridylase MnmA">
    <location>
        <begin position="1"/>
        <end position="359"/>
    </location>
</feature>
<feature type="region of interest" description="Interaction with tRNA" evidence="1">
    <location>
        <begin position="148"/>
        <end position="150"/>
    </location>
</feature>
<feature type="active site" description="Nucleophile" evidence="1">
    <location>
        <position position="101"/>
    </location>
</feature>
<feature type="active site" description="Cysteine persulfide intermediate" evidence="1">
    <location>
        <position position="198"/>
    </location>
</feature>
<feature type="binding site" evidence="1">
    <location>
        <begin position="7"/>
        <end position="14"/>
    </location>
    <ligand>
        <name>ATP</name>
        <dbReference type="ChEBI" id="CHEBI:30616"/>
    </ligand>
</feature>
<feature type="binding site" evidence="1">
    <location>
        <position position="33"/>
    </location>
    <ligand>
        <name>ATP</name>
        <dbReference type="ChEBI" id="CHEBI:30616"/>
    </ligand>
</feature>
<feature type="binding site" evidence="1">
    <location>
        <position position="125"/>
    </location>
    <ligand>
        <name>ATP</name>
        <dbReference type="ChEBI" id="CHEBI:30616"/>
    </ligand>
</feature>
<feature type="site" description="Interaction with tRNA" evidence="1">
    <location>
        <position position="126"/>
    </location>
</feature>
<feature type="site" description="Interaction with tRNA" evidence="1">
    <location>
        <position position="337"/>
    </location>
</feature>
<feature type="disulfide bond" description="Alternate" evidence="1">
    <location>
        <begin position="101"/>
        <end position="198"/>
    </location>
</feature>